<accession>Q30KQ8</accession>
<accession>Q8NET0</accession>
<dbReference type="EMBL" id="DQ012016">
    <property type="protein sequence ID" value="AAY59752.1"/>
    <property type="molecule type" value="mRNA"/>
</dbReference>
<dbReference type="EMBL" id="AY122469">
    <property type="protein sequence ID" value="AAM93911.1"/>
    <property type="molecule type" value="mRNA"/>
</dbReference>
<dbReference type="RefSeq" id="NP_001032587.1">
    <property type="nucleotide sequence ID" value="NM_001037498.1"/>
</dbReference>
<dbReference type="SMR" id="Q30KQ8"/>
<dbReference type="BioGRID" id="128840">
    <property type="interactions" value="17"/>
</dbReference>
<dbReference type="FunCoup" id="Q30KQ8">
    <property type="interactions" value="1"/>
</dbReference>
<dbReference type="IntAct" id="Q30KQ8">
    <property type="interactions" value="2"/>
</dbReference>
<dbReference type="STRING" id="9606.ENSP00000319126"/>
<dbReference type="BioMuta" id="DEFB112"/>
<dbReference type="DMDM" id="84028873"/>
<dbReference type="MassIVE" id="Q30KQ8"/>
<dbReference type="PaxDb" id="9606-ENSP00000319126"/>
<dbReference type="ProteomicsDB" id="61580"/>
<dbReference type="DNASU" id="245915"/>
<dbReference type="UCSC" id="uc011dws.2">
    <property type="organism name" value="human"/>
</dbReference>
<dbReference type="AGR" id="HGNC:18093"/>
<dbReference type="GeneCards" id="DEFB112"/>
<dbReference type="HGNC" id="HGNC:18093">
    <property type="gene designation" value="DEFB112"/>
</dbReference>
<dbReference type="neXtProt" id="NX_Q30KQ8"/>
<dbReference type="PharmGKB" id="PA38489"/>
<dbReference type="eggNOG" id="ENOG502TDZN">
    <property type="taxonomic scope" value="Eukaryota"/>
</dbReference>
<dbReference type="HOGENOM" id="CLU_176668_0_0_1"/>
<dbReference type="InParanoid" id="Q30KQ8"/>
<dbReference type="OrthoDB" id="9519794at2759"/>
<dbReference type="PAN-GO" id="Q30KQ8">
    <property type="GO annotations" value="0 GO annotations based on evolutionary models"/>
</dbReference>
<dbReference type="PhylomeDB" id="Q30KQ8"/>
<dbReference type="TreeFam" id="TF353195"/>
<dbReference type="PathwayCommons" id="Q30KQ8"/>
<dbReference type="Reactome" id="R-HSA-1461957">
    <property type="pathway name" value="Beta defensins"/>
</dbReference>
<dbReference type="Reactome" id="R-HSA-1461973">
    <property type="pathway name" value="Defensins"/>
</dbReference>
<dbReference type="SignaLink" id="Q30KQ8"/>
<dbReference type="BioGRID-ORCS" id="245915">
    <property type="hits" value="13 hits in 1101 CRISPR screens"/>
</dbReference>
<dbReference type="GenomeRNAi" id="245915"/>
<dbReference type="Pharos" id="Q30KQ8">
    <property type="development level" value="Tdark"/>
</dbReference>
<dbReference type="PRO" id="PR:Q30KQ8"/>
<dbReference type="Proteomes" id="UP000005640">
    <property type="component" value="Chromosome 6"/>
</dbReference>
<dbReference type="RNAct" id="Q30KQ8">
    <property type="molecule type" value="protein"/>
</dbReference>
<dbReference type="GO" id="GO:0005576">
    <property type="term" value="C:extracellular region"/>
    <property type="evidence" value="ECO:0007669"/>
    <property type="project" value="UniProtKB-SubCell"/>
</dbReference>
<dbReference type="GO" id="GO:0042742">
    <property type="term" value="P:defense response to bacterium"/>
    <property type="evidence" value="ECO:0007669"/>
    <property type="project" value="UniProtKB-KW"/>
</dbReference>
<dbReference type="GO" id="GO:0045087">
    <property type="term" value="P:innate immune response"/>
    <property type="evidence" value="ECO:0007669"/>
    <property type="project" value="InterPro"/>
</dbReference>
<dbReference type="InterPro" id="IPR025933">
    <property type="entry name" value="Beta_defensin_dom"/>
</dbReference>
<dbReference type="Pfam" id="PF13841">
    <property type="entry name" value="Defensin_beta_2"/>
    <property type="match status" value="1"/>
</dbReference>
<comment type="function">
    <text evidence="1">Has antibacterial activity.</text>
</comment>
<comment type="interaction">
    <interactant intactId="EBI-17470374">
        <id>Q30KQ8</id>
    </interactant>
    <interactant intactId="EBI-7116203">
        <id>O75031</id>
        <label>HSF2BP</label>
    </interactant>
    <organismsDiffer>false</organismsDiffer>
    <experiments>3</experiments>
</comment>
<comment type="interaction">
    <interactant intactId="EBI-17470374">
        <id>Q30KQ8</id>
    </interactant>
    <interactant intactId="EBI-11747707">
        <id>B2RUY7</id>
        <label>VWC2L</label>
    </interactant>
    <organismsDiffer>false</organismsDiffer>
    <experiments>3</experiments>
</comment>
<comment type="subcellular location">
    <subcellularLocation>
        <location evidence="1">Secreted</location>
    </subcellularLocation>
</comment>
<comment type="similarity">
    <text evidence="3">Belongs to the beta-defensin family.</text>
</comment>
<name>DB112_HUMAN</name>
<evidence type="ECO:0000250" key="1"/>
<evidence type="ECO:0000255" key="2"/>
<evidence type="ECO:0000305" key="3"/>
<keyword id="KW-0044">Antibiotic</keyword>
<keyword id="KW-0929">Antimicrobial</keyword>
<keyword id="KW-0211">Defensin</keyword>
<keyword id="KW-1015">Disulfide bond</keyword>
<keyword id="KW-1267">Proteomics identification</keyword>
<keyword id="KW-1185">Reference proteome</keyword>
<keyword id="KW-0964">Secreted</keyword>
<keyword id="KW-0732">Signal</keyword>
<sequence length="113" mass="12991">MKLLTTICRLKLEKMYSKTNTSSTIFEKARHGTEKISTARSEGHHITFSRWKSCTAIGGRCKNQCDDSEFRISYCARPTTHCCVTECDPTDPNNWIPKDSVGTQEWYPKDSRH</sequence>
<reference key="1">
    <citation type="journal article" date="2005" name="Physiol. Genomics">
        <title>Cross-species analysis of the mammalian beta-defensin gene family: presence of syntenic gene clusters and preferential expression in the male reproductive tract.</title>
        <authorList>
            <person name="Patil A.A."/>
            <person name="Cai Y."/>
            <person name="Sang Y."/>
            <person name="Blecha F."/>
            <person name="Zhang G."/>
        </authorList>
    </citation>
    <scope>NUCLEOTIDE SEQUENCE [MRNA]</scope>
</reference>
<reference key="2">
    <citation type="journal article" date="2002" name="Proc. Natl. Acad. Sci. U.S.A.">
        <title>Discovery of five conserved beta-defensin gene clusters using a computational search strategy.</title>
        <authorList>
            <person name="Schutte B.C."/>
            <person name="Mitros J.P."/>
            <person name="Bartlett J.A."/>
            <person name="Walters J.D."/>
            <person name="Jia H.P."/>
            <person name="Welsh M.J."/>
            <person name="Casavant T.L."/>
            <person name="McCray P.B. Jr."/>
        </authorList>
    </citation>
    <scope>NUCLEOTIDE SEQUENCE [MRNA] OF 53-73</scope>
</reference>
<protein>
    <recommendedName>
        <fullName>Beta-defensin 112</fullName>
    </recommendedName>
    <alternativeName>
        <fullName>Beta-defensin 12</fullName>
        <shortName>DEFB-12</shortName>
    </alternativeName>
    <alternativeName>
        <fullName>Defensin, beta 112</fullName>
    </alternativeName>
</protein>
<gene>
    <name type="primary">DEFB112</name>
    <name type="synonym">DEFB12</name>
</gene>
<organism>
    <name type="scientific">Homo sapiens</name>
    <name type="common">Human</name>
    <dbReference type="NCBI Taxonomy" id="9606"/>
    <lineage>
        <taxon>Eukaryota</taxon>
        <taxon>Metazoa</taxon>
        <taxon>Chordata</taxon>
        <taxon>Craniata</taxon>
        <taxon>Vertebrata</taxon>
        <taxon>Euteleostomi</taxon>
        <taxon>Mammalia</taxon>
        <taxon>Eutheria</taxon>
        <taxon>Euarchontoglires</taxon>
        <taxon>Primates</taxon>
        <taxon>Haplorrhini</taxon>
        <taxon>Catarrhini</taxon>
        <taxon>Hominidae</taxon>
        <taxon>Homo</taxon>
    </lineage>
</organism>
<feature type="signal peptide" evidence="2">
    <location>
        <begin position="1"/>
        <end status="unknown"/>
    </location>
</feature>
<feature type="chain" id="PRO_0000045338" description="Beta-defensin 112">
    <location>
        <begin status="unknown"/>
        <end position="113"/>
    </location>
</feature>
<feature type="disulfide bond" evidence="1">
    <location>
        <begin position="54"/>
        <end position="82"/>
    </location>
</feature>
<feature type="disulfide bond" evidence="1">
    <location>
        <begin position="61"/>
        <end position="75"/>
    </location>
</feature>
<feature type="disulfide bond" evidence="1">
    <location>
        <begin position="65"/>
        <end position="83"/>
    </location>
</feature>
<proteinExistence type="evidence at protein level"/>